<proteinExistence type="inferred from homology"/>
<gene>
    <name evidence="1" type="primary">surE</name>
    <name type="ordered locus">XOO2956</name>
</gene>
<accession>Q5GYL1</accession>
<sequence length="259" mass="27331">MRVLVSNDDGVDAPGIQILAEALRHGGHEVMVVAPDRDRSGASNSLTLDVPIRTRRIDAQTCAVAGTPTDCVHLALTGMLDCDPDIVVSGINNSANLGDDVIYSGTVSAAMEGRFLGLPAVAVSLVTHNHQAHHYDTAARAAVEIVARLKADPLPADTILNVNVPDLAWSDVLGFEVTRLGNRHRSEPCVPQRDPRGRTVYWIGPAGPEQDAGAGTDFHAVRTGHISITPIHVDLTRYQALETVAGWVGGLTAALDGPA</sequence>
<protein>
    <recommendedName>
        <fullName evidence="1">5'-nucleotidase SurE</fullName>
        <ecNumber evidence="1">3.1.3.5</ecNumber>
    </recommendedName>
    <alternativeName>
        <fullName evidence="1">Nucleoside 5'-monophosphate phosphohydrolase</fullName>
    </alternativeName>
</protein>
<dbReference type="EC" id="3.1.3.5" evidence="1"/>
<dbReference type="EMBL" id="AE013598">
    <property type="protein sequence ID" value="AAW76210.1"/>
    <property type="status" value="ALT_INIT"/>
    <property type="molecule type" value="Genomic_DNA"/>
</dbReference>
<dbReference type="SMR" id="Q5GYL1"/>
<dbReference type="STRING" id="291331.XOO2956"/>
<dbReference type="KEGG" id="xoo:XOO2956"/>
<dbReference type="HOGENOM" id="CLU_045192_1_2_6"/>
<dbReference type="Proteomes" id="UP000006735">
    <property type="component" value="Chromosome"/>
</dbReference>
<dbReference type="GO" id="GO:0005737">
    <property type="term" value="C:cytoplasm"/>
    <property type="evidence" value="ECO:0007669"/>
    <property type="project" value="UniProtKB-SubCell"/>
</dbReference>
<dbReference type="GO" id="GO:0008254">
    <property type="term" value="F:3'-nucleotidase activity"/>
    <property type="evidence" value="ECO:0007669"/>
    <property type="project" value="TreeGrafter"/>
</dbReference>
<dbReference type="GO" id="GO:0008253">
    <property type="term" value="F:5'-nucleotidase activity"/>
    <property type="evidence" value="ECO:0007669"/>
    <property type="project" value="UniProtKB-UniRule"/>
</dbReference>
<dbReference type="GO" id="GO:0004309">
    <property type="term" value="F:exopolyphosphatase activity"/>
    <property type="evidence" value="ECO:0007669"/>
    <property type="project" value="TreeGrafter"/>
</dbReference>
<dbReference type="GO" id="GO:0046872">
    <property type="term" value="F:metal ion binding"/>
    <property type="evidence" value="ECO:0007669"/>
    <property type="project" value="UniProtKB-UniRule"/>
</dbReference>
<dbReference type="GO" id="GO:0000166">
    <property type="term" value="F:nucleotide binding"/>
    <property type="evidence" value="ECO:0007669"/>
    <property type="project" value="UniProtKB-KW"/>
</dbReference>
<dbReference type="FunFam" id="3.40.1210.10:FF:000001">
    <property type="entry name" value="5'/3'-nucleotidase SurE"/>
    <property type="match status" value="1"/>
</dbReference>
<dbReference type="Gene3D" id="3.40.1210.10">
    <property type="entry name" value="Survival protein SurE-like phosphatase/nucleotidase"/>
    <property type="match status" value="1"/>
</dbReference>
<dbReference type="HAMAP" id="MF_00060">
    <property type="entry name" value="SurE"/>
    <property type="match status" value="1"/>
</dbReference>
<dbReference type="InterPro" id="IPR030048">
    <property type="entry name" value="SurE"/>
</dbReference>
<dbReference type="InterPro" id="IPR002828">
    <property type="entry name" value="SurE-like_Pase/nucleotidase"/>
</dbReference>
<dbReference type="InterPro" id="IPR036523">
    <property type="entry name" value="SurE-like_sf"/>
</dbReference>
<dbReference type="NCBIfam" id="NF001489">
    <property type="entry name" value="PRK00346.1-3"/>
    <property type="match status" value="1"/>
</dbReference>
<dbReference type="NCBIfam" id="NF001490">
    <property type="entry name" value="PRK00346.1-4"/>
    <property type="match status" value="1"/>
</dbReference>
<dbReference type="NCBIfam" id="TIGR00087">
    <property type="entry name" value="surE"/>
    <property type="match status" value="1"/>
</dbReference>
<dbReference type="PANTHER" id="PTHR30457">
    <property type="entry name" value="5'-NUCLEOTIDASE SURE"/>
    <property type="match status" value="1"/>
</dbReference>
<dbReference type="PANTHER" id="PTHR30457:SF12">
    <property type="entry name" value="5'_3'-NUCLEOTIDASE SURE"/>
    <property type="match status" value="1"/>
</dbReference>
<dbReference type="Pfam" id="PF01975">
    <property type="entry name" value="SurE"/>
    <property type="match status" value="1"/>
</dbReference>
<dbReference type="SUPFAM" id="SSF64167">
    <property type="entry name" value="SurE-like"/>
    <property type="match status" value="1"/>
</dbReference>
<feature type="chain" id="PRO_0000235671" description="5'-nucleotidase SurE">
    <location>
        <begin position="1"/>
        <end position="259"/>
    </location>
</feature>
<feature type="binding site" evidence="1">
    <location>
        <position position="8"/>
    </location>
    <ligand>
        <name>a divalent metal cation</name>
        <dbReference type="ChEBI" id="CHEBI:60240"/>
    </ligand>
</feature>
<feature type="binding site" evidence="1">
    <location>
        <position position="9"/>
    </location>
    <ligand>
        <name>a divalent metal cation</name>
        <dbReference type="ChEBI" id="CHEBI:60240"/>
    </ligand>
</feature>
<feature type="binding site" evidence="1">
    <location>
        <position position="40"/>
    </location>
    <ligand>
        <name>a divalent metal cation</name>
        <dbReference type="ChEBI" id="CHEBI:60240"/>
    </ligand>
</feature>
<feature type="binding site" evidence="1">
    <location>
        <position position="92"/>
    </location>
    <ligand>
        <name>a divalent metal cation</name>
        <dbReference type="ChEBI" id="CHEBI:60240"/>
    </ligand>
</feature>
<evidence type="ECO:0000255" key="1">
    <source>
        <dbReference type="HAMAP-Rule" id="MF_00060"/>
    </source>
</evidence>
<evidence type="ECO:0000305" key="2"/>
<keyword id="KW-0963">Cytoplasm</keyword>
<keyword id="KW-0378">Hydrolase</keyword>
<keyword id="KW-0479">Metal-binding</keyword>
<keyword id="KW-0547">Nucleotide-binding</keyword>
<keyword id="KW-1185">Reference proteome</keyword>
<reference key="1">
    <citation type="journal article" date="2005" name="Nucleic Acids Res.">
        <title>The genome sequence of Xanthomonas oryzae pathovar oryzae KACC10331, the bacterial blight pathogen of rice.</title>
        <authorList>
            <person name="Lee B.-M."/>
            <person name="Park Y.-J."/>
            <person name="Park D.-S."/>
            <person name="Kang H.-W."/>
            <person name="Kim J.-G."/>
            <person name="Song E.-S."/>
            <person name="Park I.-C."/>
            <person name="Yoon U.-H."/>
            <person name="Hahn J.-H."/>
            <person name="Koo B.-S."/>
            <person name="Lee G.-B."/>
            <person name="Kim H."/>
            <person name="Park H.-S."/>
            <person name="Yoon K.-O."/>
            <person name="Kim J.-H."/>
            <person name="Jung C.-H."/>
            <person name="Koh N.-H."/>
            <person name="Seo J.-S."/>
            <person name="Go S.-J."/>
        </authorList>
    </citation>
    <scope>NUCLEOTIDE SEQUENCE [LARGE SCALE GENOMIC DNA]</scope>
    <source>
        <strain>KACC10331 / KXO85</strain>
    </source>
</reference>
<comment type="function">
    <text evidence="1">Nucleotidase that shows phosphatase activity on nucleoside 5'-monophosphates.</text>
</comment>
<comment type="catalytic activity">
    <reaction evidence="1">
        <text>a ribonucleoside 5'-phosphate + H2O = a ribonucleoside + phosphate</text>
        <dbReference type="Rhea" id="RHEA:12484"/>
        <dbReference type="ChEBI" id="CHEBI:15377"/>
        <dbReference type="ChEBI" id="CHEBI:18254"/>
        <dbReference type="ChEBI" id="CHEBI:43474"/>
        <dbReference type="ChEBI" id="CHEBI:58043"/>
        <dbReference type="EC" id="3.1.3.5"/>
    </reaction>
</comment>
<comment type="cofactor">
    <cofactor evidence="1">
        <name>a divalent metal cation</name>
        <dbReference type="ChEBI" id="CHEBI:60240"/>
    </cofactor>
    <text evidence="1">Binds 1 divalent metal cation per subunit.</text>
</comment>
<comment type="subcellular location">
    <subcellularLocation>
        <location evidence="1">Cytoplasm</location>
    </subcellularLocation>
</comment>
<comment type="similarity">
    <text evidence="1">Belongs to the SurE nucleotidase family.</text>
</comment>
<comment type="sequence caution" evidence="2">
    <conflict type="erroneous initiation">
        <sequence resource="EMBL-CDS" id="AAW76210"/>
    </conflict>
</comment>
<name>SURE_XANOR</name>
<organism>
    <name type="scientific">Xanthomonas oryzae pv. oryzae (strain KACC10331 / KXO85)</name>
    <dbReference type="NCBI Taxonomy" id="291331"/>
    <lineage>
        <taxon>Bacteria</taxon>
        <taxon>Pseudomonadati</taxon>
        <taxon>Pseudomonadota</taxon>
        <taxon>Gammaproteobacteria</taxon>
        <taxon>Lysobacterales</taxon>
        <taxon>Lysobacteraceae</taxon>
        <taxon>Xanthomonas</taxon>
    </lineage>
</organism>